<keyword id="KW-0004">4Fe-4S</keyword>
<keyword id="KW-0408">Iron</keyword>
<keyword id="KW-0411">Iron-sulfur</keyword>
<keyword id="KW-0479">Metal-binding</keyword>
<keyword id="KW-1185">Reference proteome</keyword>
<reference key="1">
    <citation type="journal article" date="2002" name="Nat. Biotechnol.">
        <title>Genome sequence of the dissimilatory metal ion-reducing bacterium Shewanella oneidensis.</title>
        <authorList>
            <person name="Heidelberg J.F."/>
            <person name="Paulsen I.T."/>
            <person name="Nelson K.E."/>
            <person name="Gaidos E.J."/>
            <person name="Nelson W.C."/>
            <person name="Read T.D."/>
            <person name="Eisen J.A."/>
            <person name="Seshadri R."/>
            <person name="Ward N.L."/>
            <person name="Methe B.A."/>
            <person name="Clayton R.A."/>
            <person name="Meyer T."/>
            <person name="Tsapin A."/>
            <person name="Scott J."/>
            <person name="Beanan M.J."/>
            <person name="Brinkac L.M."/>
            <person name="Daugherty S.C."/>
            <person name="DeBoy R.T."/>
            <person name="Dodson R.J."/>
            <person name="Durkin A.S."/>
            <person name="Haft D.H."/>
            <person name="Kolonay J.F."/>
            <person name="Madupu R."/>
            <person name="Peterson J.D."/>
            <person name="Umayam L.A."/>
            <person name="White O."/>
            <person name="Wolf A.M."/>
            <person name="Vamathevan J.J."/>
            <person name="Weidman J.F."/>
            <person name="Impraim M."/>
            <person name="Lee K."/>
            <person name="Berry K.J."/>
            <person name="Lee C."/>
            <person name="Mueller J."/>
            <person name="Khouri H.M."/>
            <person name="Gill J."/>
            <person name="Utterback T.R."/>
            <person name="McDonald L.A."/>
            <person name="Feldblyum T.V."/>
            <person name="Smith H.O."/>
            <person name="Venter J.C."/>
            <person name="Nealson K.H."/>
            <person name="Fraser C.M."/>
        </authorList>
    </citation>
    <scope>NUCLEOTIDE SEQUENCE [LARGE SCALE GENOMIC DNA]</scope>
    <source>
        <strain>ATCC 700550 / JCM 31522 / CIP 106686 / LMG 19005 / NCIMB 14063 / MR-1</strain>
    </source>
</reference>
<gene>
    <name evidence="1" type="primary">nfuA</name>
    <name type="ordered locus">SO_4619</name>
</gene>
<comment type="function">
    <text evidence="1">Involved in iron-sulfur cluster biogenesis. Binds a 4Fe-4S cluster, can transfer this cluster to apoproteins, and thereby intervenes in the maturation of Fe/S proteins. Could also act as a scaffold/chaperone for damaged Fe/S proteins.</text>
</comment>
<comment type="cofactor">
    <cofactor evidence="1">
        <name>[4Fe-4S] cluster</name>
        <dbReference type="ChEBI" id="CHEBI:49883"/>
    </cofactor>
    <text evidence="1">Binds 1 [4Fe-4S] cluster per subunit. The cluster is presumably bound at the interface of two monomers.</text>
</comment>
<comment type="subunit">
    <text evidence="1">Homodimer.</text>
</comment>
<comment type="similarity">
    <text evidence="1">Belongs to the NfuA family.</text>
</comment>
<sequence length="192" mass="20516">MITISDAAQAHFVKLLADQPEGTHIRVFVISPGTAQAECGVSYCPPDAVESDDIELAFNGFSAMVDEKSAPFLEEASIDFVTDQLGSQLTLKAPNAKMRKVAGDAPLVERIEYVIQSEINPQLASHGGNIMLVEITGEGVAVLQFGGGCNGCSQVDITLKDGIEKQLLDMFPGELTGVRDVTDHQHGEHSYA</sequence>
<dbReference type="EMBL" id="AE014299">
    <property type="protein sequence ID" value="AAN57579.1"/>
    <property type="molecule type" value="Genomic_DNA"/>
</dbReference>
<dbReference type="RefSeq" id="NP_720135.1">
    <property type="nucleotide sequence ID" value="NC_004347.2"/>
</dbReference>
<dbReference type="RefSeq" id="WP_011074215.1">
    <property type="nucleotide sequence ID" value="NZ_CP053946.1"/>
</dbReference>
<dbReference type="SMR" id="Q8E8P2"/>
<dbReference type="STRING" id="211586.SO_4619"/>
<dbReference type="PaxDb" id="211586-SO_4619"/>
<dbReference type="KEGG" id="son:SO_4619"/>
<dbReference type="PATRIC" id="fig|211586.12.peg.4476"/>
<dbReference type="eggNOG" id="COG0316">
    <property type="taxonomic scope" value="Bacteria"/>
</dbReference>
<dbReference type="eggNOG" id="COG0694">
    <property type="taxonomic scope" value="Bacteria"/>
</dbReference>
<dbReference type="HOGENOM" id="CLU_094569_0_0_6"/>
<dbReference type="OrthoDB" id="9785450at2"/>
<dbReference type="PhylomeDB" id="Q8E8P2"/>
<dbReference type="BioCyc" id="SONE211586:G1GMP-4268-MONOMER"/>
<dbReference type="Proteomes" id="UP000008186">
    <property type="component" value="Chromosome"/>
</dbReference>
<dbReference type="GO" id="GO:0051539">
    <property type="term" value="F:4 iron, 4 sulfur cluster binding"/>
    <property type="evidence" value="ECO:0000318"/>
    <property type="project" value="GO_Central"/>
</dbReference>
<dbReference type="GO" id="GO:0005506">
    <property type="term" value="F:iron ion binding"/>
    <property type="evidence" value="ECO:0007669"/>
    <property type="project" value="InterPro"/>
</dbReference>
<dbReference type="GO" id="GO:0016226">
    <property type="term" value="P:iron-sulfur cluster assembly"/>
    <property type="evidence" value="ECO:0007669"/>
    <property type="project" value="UniProtKB-UniRule"/>
</dbReference>
<dbReference type="GO" id="GO:0051604">
    <property type="term" value="P:protein maturation"/>
    <property type="evidence" value="ECO:0007669"/>
    <property type="project" value="UniProtKB-UniRule"/>
</dbReference>
<dbReference type="Gene3D" id="3.30.300.130">
    <property type="entry name" value="Fe-S cluster assembly (FSCA)"/>
    <property type="match status" value="1"/>
</dbReference>
<dbReference type="Gene3D" id="2.60.300.12">
    <property type="entry name" value="HesB-like domain"/>
    <property type="match status" value="1"/>
</dbReference>
<dbReference type="HAMAP" id="MF_01637">
    <property type="entry name" value="Fe_S_biogen_NfuA"/>
    <property type="match status" value="1"/>
</dbReference>
<dbReference type="InterPro" id="IPR017726">
    <property type="entry name" value="Fe/S_biogenesis_protein_NfuA"/>
</dbReference>
<dbReference type="InterPro" id="IPR000361">
    <property type="entry name" value="FeS_biogenesis"/>
</dbReference>
<dbReference type="InterPro" id="IPR034904">
    <property type="entry name" value="FSCA_dom_sf"/>
</dbReference>
<dbReference type="InterPro" id="IPR035903">
    <property type="entry name" value="HesB-like_dom_sf"/>
</dbReference>
<dbReference type="InterPro" id="IPR001075">
    <property type="entry name" value="NIF_FeS_clus_asmbl_NifU_C"/>
</dbReference>
<dbReference type="NCBIfam" id="NF008392">
    <property type="entry name" value="PRK11190.1"/>
    <property type="match status" value="1"/>
</dbReference>
<dbReference type="NCBIfam" id="TIGR03341">
    <property type="entry name" value="YhgI_GntY"/>
    <property type="match status" value="1"/>
</dbReference>
<dbReference type="PANTHER" id="PTHR11178:SF51">
    <property type="entry name" value="FE_S BIOGENESIS PROTEIN NFUA"/>
    <property type="match status" value="1"/>
</dbReference>
<dbReference type="PANTHER" id="PTHR11178">
    <property type="entry name" value="IRON-SULFUR CLUSTER SCAFFOLD PROTEIN NFU-RELATED"/>
    <property type="match status" value="1"/>
</dbReference>
<dbReference type="Pfam" id="PF01521">
    <property type="entry name" value="Fe-S_biosyn"/>
    <property type="match status" value="1"/>
</dbReference>
<dbReference type="Pfam" id="PF01106">
    <property type="entry name" value="NifU"/>
    <property type="match status" value="1"/>
</dbReference>
<dbReference type="SUPFAM" id="SSF117916">
    <property type="entry name" value="Fe-S cluster assembly (FSCA) domain-like"/>
    <property type="match status" value="1"/>
</dbReference>
<dbReference type="SUPFAM" id="SSF89360">
    <property type="entry name" value="HesB-like domain"/>
    <property type="match status" value="1"/>
</dbReference>
<feature type="chain" id="PRO_0000209484" description="Fe/S biogenesis protein NfuA">
    <location>
        <begin position="1"/>
        <end position="192"/>
    </location>
</feature>
<feature type="binding site" evidence="1">
    <location>
        <position position="149"/>
    </location>
    <ligand>
        <name>[4Fe-4S] cluster</name>
        <dbReference type="ChEBI" id="CHEBI:49883"/>
    </ligand>
</feature>
<feature type="binding site" evidence="1">
    <location>
        <position position="152"/>
    </location>
    <ligand>
        <name>[4Fe-4S] cluster</name>
        <dbReference type="ChEBI" id="CHEBI:49883"/>
    </ligand>
</feature>
<evidence type="ECO:0000255" key="1">
    <source>
        <dbReference type="HAMAP-Rule" id="MF_01637"/>
    </source>
</evidence>
<accession>Q8E8P2</accession>
<name>NFUA_SHEON</name>
<organism>
    <name type="scientific">Shewanella oneidensis (strain ATCC 700550 / JCM 31522 / CIP 106686 / LMG 19005 / NCIMB 14063 / MR-1)</name>
    <dbReference type="NCBI Taxonomy" id="211586"/>
    <lineage>
        <taxon>Bacteria</taxon>
        <taxon>Pseudomonadati</taxon>
        <taxon>Pseudomonadota</taxon>
        <taxon>Gammaproteobacteria</taxon>
        <taxon>Alteromonadales</taxon>
        <taxon>Shewanellaceae</taxon>
        <taxon>Shewanella</taxon>
    </lineage>
</organism>
<proteinExistence type="inferred from homology"/>
<protein>
    <recommendedName>
        <fullName evidence="1">Fe/S biogenesis protein NfuA</fullName>
    </recommendedName>
</protein>